<keyword id="KW-0687">Ribonucleoprotein</keyword>
<keyword id="KW-0689">Ribosomal protein</keyword>
<name>RL33_CHESB</name>
<sequence length="55" mass="6441">MAKATTIKIKLLSTADTGFFYVTKKNSRTMTDKMTKRKYDPIARKHVEFKETKIK</sequence>
<accession>Q11IM9</accession>
<feature type="chain" id="PRO_0000356538" description="Large ribosomal subunit protein bL33">
    <location>
        <begin position="1"/>
        <end position="55"/>
    </location>
</feature>
<proteinExistence type="inferred from homology"/>
<reference key="1">
    <citation type="submission" date="2006-06" db="EMBL/GenBank/DDBJ databases">
        <title>Complete sequence of chromosome of Mesorhizobium sp. BNC1.</title>
        <authorList>
            <consortium name="US DOE Joint Genome Institute"/>
            <person name="Copeland A."/>
            <person name="Lucas S."/>
            <person name="Lapidus A."/>
            <person name="Barry K."/>
            <person name="Detter J.C."/>
            <person name="Glavina del Rio T."/>
            <person name="Hammon N."/>
            <person name="Israni S."/>
            <person name="Dalin E."/>
            <person name="Tice H."/>
            <person name="Pitluck S."/>
            <person name="Chertkov O."/>
            <person name="Brettin T."/>
            <person name="Bruce D."/>
            <person name="Han C."/>
            <person name="Tapia R."/>
            <person name="Gilna P."/>
            <person name="Schmutz J."/>
            <person name="Larimer F."/>
            <person name="Land M."/>
            <person name="Hauser L."/>
            <person name="Kyrpides N."/>
            <person name="Mikhailova N."/>
            <person name="Richardson P."/>
        </authorList>
    </citation>
    <scope>NUCLEOTIDE SEQUENCE [LARGE SCALE GENOMIC DNA]</scope>
    <source>
        <strain>BNC1</strain>
    </source>
</reference>
<evidence type="ECO:0000255" key="1">
    <source>
        <dbReference type="HAMAP-Rule" id="MF_00294"/>
    </source>
</evidence>
<evidence type="ECO:0000305" key="2"/>
<dbReference type="EMBL" id="CP000390">
    <property type="protein sequence ID" value="ABG62746.1"/>
    <property type="molecule type" value="Genomic_DNA"/>
</dbReference>
<dbReference type="SMR" id="Q11IM9"/>
<dbReference type="STRING" id="266779.Meso_1350"/>
<dbReference type="KEGG" id="mes:Meso_1350"/>
<dbReference type="eggNOG" id="COG0267">
    <property type="taxonomic scope" value="Bacteria"/>
</dbReference>
<dbReference type="HOGENOM" id="CLU_190949_1_1_5"/>
<dbReference type="OrthoDB" id="21586at2"/>
<dbReference type="GO" id="GO:0022625">
    <property type="term" value="C:cytosolic large ribosomal subunit"/>
    <property type="evidence" value="ECO:0007669"/>
    <property type="project" value="TreeGrafter"/>
</dbReference>
<dbReference type="GO" id="GO:0003735">
    <property type="term" value="F:structural constituent of ribosome"/>
    <property type="evidence" value="ECO:0007669"/>
    <property type="project" value="InterPro"/>
</dbReference>
<dbReference type="GO" id="GO:0006412">
    <property type="term" value="P:translation"/>
    <property type="evidence" value="ECO:0007669"/>
    <property type="project" value="UniProtKB-UniRule"/>
</dbReference>
<dbReference type="Gene3D" id="2.20.28.120">
    <property type="entry name" value="Ribosomal protein L33"/>
    <property type="match status" value="1"/>
</dbReference>
<dbReference type="HAMAP" id="MF_00294">
    <property type="entry name" value="Ribosomal_bL33"/>
    <property type="match status" value="1"/>
</dbReference>
<dbReference type="InterPro" id="IPR001705">
    <property type="entry name" value="Ribosomal_bL33"/>
</dbReference>
<dbReference type="InterPro" id="IPR018264">
    <property type="entry name" value="Ribosomal_bL33_CS"/>
</dbReference>
<dbReference type="InterPro" id="IPR038584">
    <property type="entry name" value="Ribosomal_bL33_sf"/>
</dbReference>
<dbReference type="InterPro" id="IPR011332">
    <property type="entry name" value="Ribosomal_zn-bd"/>
</dbReference>
<dbReference type="NCBIfam" id="NF001860">
    <property type="entry name" value="PRK00595.1"/>
    <property type="match status" value="1"/>
</dbReference>
<dbReference type="NCBIfam" id="TIGR01023">
    <property type="entry name" value="rpmG_bact"/>
    <property type="match status" value="1"/>
</dbReference>
<dbReference type="PANTHER" id="PTHR15238">
    <property type="entry name" value="54S RIBOSOMAL PROTEIN L39, MITOCHONDRIAL"/>
    <property type="match status" value="1"/>
</dbReference>
<dbReference type="PANTHER" id="PTHR15238:SF1">
    <property type="entry name" value="LARGE RIBOSOMAL SUBUNIT PROTEIN BL33M"/>
    <property type="match status" value="1"/>
</dbReference>
<dbReference type="Pfam" id="PF00471">
    <property type="entry name" value="Ribosomal_L33"/>
    <property type="match status" value="1"/>
</dbReference>
<dbReference type="SUPFAM" id="SSF57829">
    <property type="entry name" value="Zn-binding ribosomal proteins"/>
    <property type="match status" value="1"/>
</dbReference>
<dbReference type="PROSITE" id="PS00582">
    <property type="entry name" value="RIBOSOMAL_L33"/>
    <property type="match status" value="1"/>
</dbReference>
<organism>
    <name type="scientific">Chelativorans sp. (strain BNC1)</name>
    <dbReference type="NCBI Taxonomy" id="266779"/>
    <lineage>
        <taxon>Bacteria</taxon>
        <taxon>Pseudomonadati</taxon>
        <taxon>Pseudomonadota</taxon>
        <taxon>Alphaproteobacteria</taxon>
        <taxon>Hyphomicrobiales</taxon>
        <taxon>Phyllobacteriaceae</taxon>
        <taxon>Chelativorans</taxon>
    </lineage>
</organism>
<comment type="similarity">
    <text evidence="1">Belongs to the bacterial ribosomal protein bL33 family.</text>
</comment>
<protein>
    <recommendedName>
        <fullName evidence="1">Large ribosomal subunit protein bL33</fullName>
    </recommendedName>
    <alternativeName>
        <fullName evidence="2">50S ribosomal protein L33</fullName>
    </alternativeName>
</protein>
<gene>
    <name evidence="1" type="primary">rpmG</name>
    <name type="ordered locus">Meso_1350</name>
</gene>